<proteinExistence type="evidence at transcript level"/>
<comment type="function">
    <text evidence="3">Provides the precursors necessary for DNA synthesis. Catalyzes the biosynthesis of deoxyribonucleotides from the corresponding ribonucleotides.</text>
</comment>
<comment type="catalytic activity">
    <reaction evidence="2">
        <text>a 2'-deoxyribonucleoside 5'-diphosphate + [thioredoxin]-disulfide + H2O = a ribonucleoside 5'-diphosphate + [thioredoxin]-dithiol</text>
        <dbReference type="Rhea" id="RHEA:23252"/>
        <dbReference type="Rhea" id="RHEA-COMP:10698"/>
        <dbReference type="Rhea" id="RHEA-COMP:10700"/>
        <dbReference type="ChEBI" id="CHEBI:15377"/>
        <dbReference type="ChEBI" id="CHEBI:29950"/>
        <dbReference type="ChEBI" id="CHEBI:50058"/>
        <dbReference type="ChEBI" id="CHEBI:57930"/>
        <dbReference type="ChEBI" id="CHEBI:73316"/>
        <dbReference type="EC" id="1.17.4.1"/>
    </reaction>
</comment>
<comment type="cofactor">
    <cofactor evidence="1">
        <name>Fe cation</name>
        <dbReference type="ChEBI" id="CHEBI:24875"/>
    </cofactor>
    <text evidence="1">Binds 2 iron ions per subunit.</text>
</comment>
<comment type="subunit">
    <text evidence="1">Heterodimer of a large and a small chain.</text>
</comment>
<comment type="subcellular location">
    <subcellularLocation>
        <location evidence="1">Cytoplasm</location>
    </subcellularLocation>
</comment>
<comment type="tissue specificity">
    <text evidence="3">Expressed in roots, rosette leaves, stems and flowers.</text>
</comment>
<comment type="disruption phenotype">
    <text evidence="3">No visible phenotype, due to the redundancy with RNR2A and TSO2. Rnr2a and rnr2b double mutants have no visible phenotype.</text>
</comment>
<comment type="similarity">
    <text evidence="4">Belongs to the ribonucleoside diphosphate reductase small chain family.</text>
</comment>
<comment type="caution">
    <text evidence="4">In cv. Columbia, could be the product of a pseudogene (AC P0DKH2) due to a frameshift in position 140. The resulting shorter protein lacks the conserved features of the family.</text>
</comment>
<dbReference type="EC" id="1.17.4.1"/>
<dbReference type="EMBL" id="AY178109">
    <property type="protein sequence ID" value="AAO62422.1"/>
    <property type="molecule type" value="mRNA"/>
</dbReference>
<dbReference type="SMR" id="P0DKH3"/>
<dbReference type="ExpressionAtlas" id="P0DKH3">
    <property type="expression patterns" value="baseline and differential"/>
</dbReference>
<dbReference type="GO" id="GO:0005737">
    <property type="term" value="C:cytoplasm"/>
    <property type="evidence" value="ECO:0007669"/>
    <property type="project" value="UniProtKB-SubCell"/>
</dbReference>
<dbReference type="GO" id="GO:0046872">
    <property type="term" value="F:metal ion binding"/>
    <property type="evidence" value="ECO:0007669"/>
    <property type="project" value="UniProtKB-KW"/>
</dbReference>
<dbReference type="GO" id="GO:0004748">
    <property type="term" value="F:ribonucleoside-diphosphate reductase activity, thioredoxin disulfide as acceptor"/>
    <property type="evidence" value="ECO:0007669"/>
    <property type="project" value="UniProtKB-EC"/>
</dbReference>
<dbReference type="GO" id="GO:0009263">
    <property type="term" value="P:deoxyribonucleotide biosynthetic process"/>
    <property type="evidence" value="ECO:0007669"/>
    <property type="project" value="UniProtKB-KW"/>
</dbReference>
<dbReference type="CDD" id="cd01049">
    <property type="entry name" value="RNRR2"/>
    <property type="match status" value="1"/>
</dbReference>
<dbReference type="FunFam" id="1.10.620.20:FF:000008">
    <property type="entry name" value="Ribonucleoside-diphosphate reductase"/>
    <property type="match status" value="1"/>
</dbReference>
<dbReference type="Gene3D" id="1.10.620.20">
    <property type="entry name" value="Ribonucleotide Reductase, subunit A"/>
    <property type="match status" value="1"/>
</dbReference>
<dbReference type="InterPro" id="IPR009078">
    <property type="entry name" value="Ferritin-like_SF"/>
</dbReference>
<dbReference type="InterPro" id="IPR012348">
    <property type="entry name" value="RNR-like"/>
</dbReference>
<dbReference type="InterPro" id="IPR033909">
    <property type="entry name" value="RNR_small"/>
</dbReference>
<dbReference type="InterPro" id="IPR030475">
    <property type="entry name" value="RNR_small_AS"/>
</dbReference>
<dbReference type="InterPro" id="IPR000358">
    <property type="entry name" value="RNR_small_fam"/>
</dbReference>
<dbReference type="PANTHER" id="PTHR23409">
    <property type="entry name" value="RIBONUCLEOSIDE-DIPHOSPHATE REDUCTASE SMALL CHAIN"/>
    <property type="match status" value="1"/>
</dbReference>
<dbReference type="PANTHER" id="PTHR23409:SF18">
    <property type="entry name" value="RIBONUCLEOSIDE-DIPHOSPHATE REDUCTASE SUBUNIT M2"/>
    <property type="match status" value="1"/>
</dbReference>
<dbReference type="Pfam" id="PF00268">
    <property type="entry name" value="Ribonuc_red_sm"/>
    <property type="match status" value="1"/>
</dbReference>
<dbReference type="SUPFAM" id="SSF47240">
    <property type="entry name" value="Ferritin-like"/>
    <property type="match status" value="1"/>
</dbReference>
<dbReference type="PROSITE" id="PS00368">
    <property type="entry name" value="RIBORED_SMALL"/>
    <property type="match status" value="1"/>
</dbReference>
<sequence length="333" mass="38331">MPSMPEEPILTPTPDRFCMFPIQYPQIWEMYKKAEASFWTAEEVDLSQDNRDWENSLTNDERHFIKHVLAFFAASDGIVLENLSTRFMSDVQISEARAFYGFQIAIENIHSEMYSLLLDTYIKDNKERDHLFRAIETIPCVTKKAEWAMKWINGSQSFAERIVAFACVEGIFFSGSFCSIFWLKKRGLMPGLTFSNELISRDEGLHCDFACLIYSLLRTKLDEDRLKAIVCDAVEIEREFVCDALPCALVGMNRELMSQYIEFVADRLLAALGCAKVYGVSNPFDWMELISLQGKTNFFEKRVGEYQKASIMSSVHGNAAFNDDHVFKLDEDF</sequence>
<reference key="1">
    <citation type="journal article" date="2006" name="Plant Cell">
        <title>Arabidopsis ribonucleotide reductases are critical for cell cycle progression, DNA damage repair, and plant development.</title>
        <authorList>
            <person name="Wang C."/>
            <person name="Liu Z."/>
        </authorList>
    </citation>
    <scope>NUCLEOTIDE SEQUENCE [MRNA]</scope>
    <scope>TISSUE SPECIFICITY</scope>
    <scope>FUNCTION</scope>
    <scope>DISRUPTION PHENOTYPE</scope>
    <source>
        <strain>cv. Landsberg erecta</strain>
        <strain>cv. Wassilewskija</strain>
    </source>
</reference>
<gene>
    <name type="primary">RNR2B</name>
</gene>
<organism>
    <name type="scientific">Arabidopsis thaliana</name>
    <name type="common">Mouse-ear cress</name>
    <dbReference type="NCBI Taxonomy" id="3702"/>
    <lineage>
        <taxon>Eukaryota</taxon>
        <taxon>Viridiplantae</taxon>
        <taxon>Streptophyta</taxon>
        <taxon>Embryophyta</taxon>
        <taxon>Tracheophyta</taxon>
        <taxon>Spermatophyta</taxon>
        <taxon>Magnoliopsida</taxon>
        <taxon>eudicotyledons</taxon>
        <taxon>Gunneridae</taxon>
        <taxon>Pentapetalae</taxon>
        <taxon>rosids</taxon>
        <taxon>malvids</taxon>
        <taxon>Brassicales</taxon>
        <taxon>Brassicaceae</taxon>
        <taxon>Camelineae</taxon>
        <taxon>Arabidopsis</taxon>
    </lineage>
</organism>
<feature type="chain" id="PRO_0000430464" description="Ribonucleoside-diphosphate reductase small chain B">
    <location>
        <begin position="1"/>
        <end position="333"/>
    </location>
</feature>
<feature type="active site" evidence="2">
    <location>
        <position position="114"/>
    </location>
</feature>
<feature type="binding site" evidence="2">
    <location>
        <position position="76"/>
    </location>
    <ligand>
        <name>Fe cation</name>
        <dbReference type="ChEBI" id="CHEBI:24875"/>
        <label>1</label>
    </ligand>
</feature>
<feature type="binding site" evidence="2">
    <location>
        <position position="107"/>
    </location>
    <ligand>
        <name>Fe cation</name>
        <dbReference type="ChEBI" id="CHEBI:24875"/>
        <label>1</label>
    </ligand>
</feature>
<feature type="binding site" evidence="1">
    <location>
        <position position="107"/>
    </location>
    <ligand>
        <name>Fe cation</name>
        <dbReference type="ChEBI" id="CHEBI:24875"/>
        <label>2</label>
    </ligand>
</feature>
<feature type="binding site" evidence="2">
    <location>
        <position position="110"/>
    </location>
    <ligand>
        <name>Fe cation</name>
        <dbReference type="ChEBI" id="CHEBI:24875"/>
        <label>1</label>
    </ligand>
</feature>
<feature type="binding site" evidence="1">
    <location>
        <position position="169"/>
    </location>
    <ligand>
        <name>Fe cation</name>
        <dbReference type="ChEBI" id="CHEBI:24875"/>
        <label>2</label>
    </ligand>
</feature>
<feature type="binding site" evidence="1">
    <location>
        <position position="203"/>
    </location>
    <ligand>
        <name>Fe cation</name>
        <dbReference type="ChEBI" id="CHEBI:24875"/>
        <label>2</label>
    </ligand>
</feature>
<feature type="binding site" evidence="1">
    <location>
        <position position="206"/>
    </location>
    <ligand>
        <name>Fe cation</name>
        <dbReference type="ChEBI" id="CHEBI:24875"/>
        <label>2</label>
    </ligand>
</feature>
<keyword id="KW-0963">Cytoplasm</keyword>
<keyword id="KW-0215">Deoxyribonucleotide synthesis</keyword>
<keyword id="KW-0408">Iron</keyword>
<keyword id="KW-0479">Metal-binding</keyword>
<keyword id="KW-0560">Oxidoreductase</keyword>
<protein>
    <recommendedName>
        <fullName>Ribonucleoside-diphosphate reductase small chain B</fullName>
        <ecNumber>1.17.4.1</ecNumber>
    </recommendedName>
    <alternativeName>
        <fullName>Ribonucleoside-diphosphate reductase R2B subunit</fullName>
    </alternativeName>
    <alternativeName>
        <fullName>Ribonucleotide reductase small subunit B</fullName>
    </alternativeName>
</protein>
<name>RI2BL_ARATH</name>
<evidence type="ECO:0000250" key="1"/>
<evidence type="ECO:0000255" key="2">
    <source>
        <dbReference type="PROSITE-ProRule" id="PRU10014"/>
    </source>
</evidence>
<evidence type="ECO:0000269" key="3">
    <source>
    </source>
</evidence>
<evidence type="ECO:0000305" key="4"/>
<accession>P0DKH3</accession>
<accession>Q6Y657</accession>
<accession>Q84W71</accession>